<comment type="catalytic activity">
    <reaction>
        <text>N-(5-phospho-beta-D-ribosyl)anthranilate = 1-(2-carboxyphenylamino)-1-deoxy-D-ribulose 5-phosphate</text>
        <dbReference type="Rhea" id="RHEA:21540"/>
        <dbReference type="ChEBI" id="CHEBI:18277"/>
        <dbReference type="ChEBI" id="CHEBI:58613"/>
        <dbReference type="EC" id="5.3.1.24"/>
    </reaction>
</comment>
<comment type="pathway">
    <text>Amino-acid biosynthesis; L-tryptophan biosynthesis; L-tryptophan from chorismate: step 3/5.</text>
</comment>
<comment type="similarity">
    <text evidence="1">Belongs to the TrpF family.</text>
</comment>
<protein>
    <recommendedName>
        <fullName>N-(5'-phosphoribosyl)anthranilate isomerase</fullName>
        <shortName>PRAI</shortName>
        <ecNumber>5.3.1.24</ecNumber>
    </recommendedName>
</protein>
<feature type="chain" id="PRO_0000154338" description="N-(5'-phosphoribosyl)anthranilate isomerase">
    <location>
        <begin position="1"/>
        <end position="205"/>
    </location>
</feature>
<name>TRPF_ZYGBA</name>
<evidence type="ECO:0000305" key="1"/>
<accession>Q9HFW8</accession>
<keyword id="KW-0028">Amino-acid biosynthesis</keyword>
<keyword id="KW-0057">Aromatic amino acid biosynthesis</keyword>
<keyword id="KW-0413">Isomerase</keyword>
<keyword id="KW-0822">Tryptophan biosynthesis</keyword>
<gene>
    <name type="primary">TRP1</name>
</gene>
<reference key="1">
    <citation type="journal article" date="2001" name="Yeast">
        <title>Targeted gene deletion in Zygosaccharomyces bailii.</title>
        <authorList>
            <person name="Mollapour M."/>
            <person name="Piper P.W."/>
        </authorList>
    </citation>
    <scope>NUCLEOTIDE SEQUENCE [GENOMIC DNA]</scope>
    <source>
        <strain>CBS 685 / NCYC 563 / NRRL Y-12949</strain>
    </source>
</reference>
<reference key="2">
    <citation type="submission" date="2001-04" db="EMBL/GenBank/DDBJ databases">
        <title>Sequence analyses of a Zygosaccharomyces bailii DNA fragment containing the Thr-tRNA, IPP1 and TRP1 genes.</title>
        <authorList>
            <person name="Rodrigues F.J."/>
            <person name="Steensma Y."/>
            <person name="Corte-Real M.S."/>
        </authorList>
    </citation>
    <scope>NUCLEOTIDE SEQUENCE [GENOMIC DNA]</scope>
    <source>
        <strain>ISA 1307</strain>
    </source>
</reference>
<organism>
    <name type="scientific">Zygosaccharomyces bailii</name>
    <dbReference type="NCBI Taxonomy" id="4954"/>
    <lineage>
        <taxon>Eukaryota</taxon>
        <taxon>Fungi</taxon>
        <taxon>Dikarya</taxon>
        <taxon>Ascomycota</taxon>
        <taxon>Saccharomycotina</taxon>
        <taxon>Saccharomycetes</taxon>
        <taxon>Saccharomycetales</taxon>
        <taxon>Saccharomycetaceae</taxon>
        <taxon>Zygosaccharomyces</taxon>
    </lineage>
</organism>
<proteinExistence type="inferred from homology"/>
<dbReference type="EC" id="5.3.1.24"/>
<dbReference type="EMBL" id="AF279262">
    <property type="protein sequence ID" value="AAG17697.1"/>
    <property type="molecule type" value="Genomic_DNA"/>
</dbReference>
<dbReference type="EMBL" id="AJ309279">
    <property type="protein sequence ID" value="CAC37331.1"/>
    <property type="molecule type" value="Genomic_DNA"/>
</dbReference>
<dbReference type="SMR" id="Q9HFW8"/>
<dbReference type="UniPathway" id="UPA00035">
    <property type="reaction ID" value="UER00042"/>
</dbReference>
<dbReference type="GO" id="GO:0004640">
    <property type="term" value="F:phosphoribosylanthranilate isomerase activity"/>
    <property type="evidence" value="ECO:0007669"/>
    <property type="project" value="UniProtKB-EC"/>
</dbReference>
<dbReference type="GO" id="GO:0000162">
    <property type="term" value="P:L-tryptophan biosynthetic process"/>
    <property type="evidence" value="ECO:0007669"/>
    <property type="project" value="UniProtKB-UniPathway"/>
</dbReference>
<dbReference type="CDD" id="cd00405">
    <property type="entry name" value="PRAI"/>
    <property type="match status" value="1"/>
</dbReference>
<dbReference type="Gene3D" id="3.20.20.70">
    <property type="entry name" value="Aldolase class I"/>
    <property type="match status" value="1"/>
</dbReference>
<dbReference type="HAMAP" id="MF_00135">
    <property type="entry name" value="PRAI"/>
    <property type="match status" value="1"/>
</dbReference>
<dbReference type="InterPro" id="IPR013785">
    <property type="entry name" value="Aldolase_TIM"/>
</dbReference>
<dbReference type="InterPro" id="IPR001240">
    <property type="entry name" value="PRAI_dom"/>
</dbReference>
<dbReference type="InterPro" id="IPR011060">
    <property type="entry name" value="RibuloseP-bd_barrel"/>
</dbReference>
<dbReference type="InterPro" id="IPR044643">
    <property type="entry name" value="TrpF_fam"/>
</dbReference>
<dbReference type="PANTHER" id="PTHR42894">
    <property type="entry name" value="N-(5'-PHOSPHORIBOSYL)ANTHRANILATE ISOMERASE"/>
    <property type="match status" value="1"/>
</dbReference>
<dbReference type="PANTHER" id="PTHR42894:SF1">
    <property type="entry name" value="N-(5'-PHOSPHORIBOSYL)ANTHRANILATE ISOMERASE"/>
    <property type="match status" value="1"/>
</dbReference>
<dbReference type="Pfam" id="PF00697">
    <property type="entry name" value="PRAI"/>
    <property type="match status" value="1"/>
</dbReference>
<dbReference type="SUPFAM" id="SSF51366">
    <property type="entry name" value="Ribulose-phoshate binding barrel"/>
    <property type="match status" value="1"/>
</dbReference>
<sequence length="205" mass="22316">MIAKICGLQSVEAAQQAVDNGADLIGVICVPNRKRTVDPEIARSISKICHGTGTRLVGVFRNQPKEEVRQLAQEYELDVVQLHGDEDWQEYASYVGLPLLKRVVFPRDVSLVSQMDGEVCTPLFDSEAGGSGEKLDWQAIGSWFQDSQLTRGYLLAGGLSPDNVVEALRVPGVVGVDVSGGVETDGTKDLAKIKQFLELYKVNVN</sequence>